<sequence length="156" mass="17413">MSRRNAAVKRPVLPDPQFNNRLATMLVARLMKHGKKSTAQRILSDAFSLIGERTGGDPIELFETAVKNATPLVEVRARRVGGATYQVPMEVRQERGTAMALRWLVSFSRARNGRSMAQKLAGELMDAANEAGSAVRKREETHKMAEANKAFAHYRY</sequence>
<dbReference type="EMBL" id="CT971583">
    <property type="protein sequence ID" value="CAK22807.1"/>
    <property type="molecule type" value="Genomic_DNA"/>
</dbReference>
<dbReference type="SMR" id="A5GIP2"/>
<dbReference type="STRING" id="32051.SynWH7803_0381"/>
<dbReference type="KEGG" id="syx:SynWH7803_0381"/>
<dbReference type="eggNOG" id="COG0049">
    <property type="taxonomic scope" value="Bacteria"/>
</dbReference>
<dbReference type="HOGENOM" id="CLU_072226_1_1_3"/>
<dbReference type="OrthoDB" id="9807653at2"/>
<dbReference type="Proteomes" id="UP000001566">
    <property type="component" value="Chromosome"/>
</dbReference>
<dbReference type="GO" id="GO:0015935">
    <property type="term" value="C:small ribosomal subunit"/>
    <property type="evidence" value="ECO:0007669"/>
    <property type="project" value="InterPro"/>
</dbReference>
<dbReference type="GO" id="GO:0019843">
    <property type="term" value="F:rRNA binding"/>
    <property type="evidence" value="ECO:0007669"/>
    <property type="project" value="UniProtKB-UniRule"/>
</dbReference>
<dbReference type="GO" id="GO:0003735">
    <property type="term" value="F:structural constituent of ribosome"/>
    <property type="evidence" value="ECO:0007669"/>
    <property type="project" value="InterPro"/>
</dbReference>
<dbReference type="GO" id="GO:0000049">
    <property type="term" value="F:tRNA binding"/>
    <property type="evidence" value="ECO:0007669"/>
    <property type="project" value="UniProtKB-UniRule"/>
</dbReference>
<dbReference type="GO" id="GO:0006412">
    <property type="term" value="P:translation"/>
    <property type="evidence" value="ECO:0007669"/>
    <property type="project" value="UniProtKB-UniRule"/>
</dbReference>
<dbReference type="CDD" id="cd14869">
    <property type="entry name" value="uS7_Bacteria"/>
    <property type="match status" value="1"/>
</dbReference>
<dbReference type="FunFam" id="1.10.455.10:FF:000001">
    <property type="entry name" value="30S ribosomal protein S7"/>
    <property type="match status" value="1"/>
</dbReference>
<dbReference type="Gene3D" id="1.10.455.10">
    <property type="entry name" value="Ribosomal protein S7 domain"/>
    <property type="match status" value="1"/>
</dbReference>
<dbReference type="HAMAP" id="MF_00480_B">
    <property type="entry name" value="Ribosomal_uS7_B"/>
    <property type="match status" value="1"/>
</dbReference>
<dbReference type="InterPro" id="IPR000235">
    <property type="entry name" value="Ribosomal_uS7"/>
</dbReference>
<dbReference type="InterPro" id="IPR005717">
    <property type="entry name" value="Ribosomal_uS7_bac/org-type"/>
</dbReference>
<dbReference type="InterPro" id="IPR020606">
    <property type="entry name" value="Ribosomal_uS7_CS"/>
</dbReference>
<dbReference type="InterPro" id="IPR023798">
    <property type="entry name" value="Ribosomal_uS7_dom"/>
</dbReference>
<dbReference type="InterPro" id="IPR036823">
    <property type="entry name" value="Ribosomal_uS7_dom_sf"/>
</dbReference>
<dbReference type="NCBIfam" id="TIGR01029">
    <property type="entry name" value="rpsG_bact"/>
    <property type="match status" value="1"/>
</dbReference>
<dbReference type="PANTHER" id="PTHR11205">
    <property type="entry name" value="RIBOSOMAL PROTEIN S7"/>
    <property type="match status" value="1"/>
</dbReference>
<dbReference type="Pfam" id="PF00177">
    <property type="entry name" value="Ribosomal_S7"/>
    <property type="match status" value="1"/>
</dbReference>
<dbReference type="PIRSF" id="PIRSF002122">
    <property type="entry name" value="RPS7p_RPS7a_RPS5e_RPS7o"/>
    <property type="match status" value="1"/>
</dbReference>
<dbReference type="SUPFAM" id="SSF47973">
    <property type="entry name" value="Ribosomal protein S7"/>
    <property type="match status" value="1"/>
</dbReference>
<dbReference type="PROSITE" id="PS00052">
    <property type="entry name" value="RIBOSOMAL_S7"/>
    <property type="match status" value="1"/>
</dbReference>
<protein>
    <recommendedName>
        <fullName evidence="1">Small ribosomal subunit protein uS7</fullName>
    </recommendedName>
    <alternativeName>
        <fullName evidence="2">30S ribosomal protein S7</fullName>
    </alternativeName>
</protein>
<reference key="1">
    <citation type="submission" date="2006-05" db="EMBL/GenBank/DDBJ databases">
        <authorList>
            <consortium name="Genoscope"/>
        </authorList>
    </citation>
    <scope>NUCLEOTIDE SEQUENCE [LARGE SCALE GENOMIC DNA]</scope>
    <source>
        <strain>WH7803</strain>
    </source>
</reference>
<feature type="chain" id="PRO_1000014310" description="Small ribosomal subunit protein uS7">
    <location>
        <begin position="1"/>
        <end position="156"/>
    </location>
</feature>
<name>RS7_SYNPW</name>
<organism>
    <name type="scientific">Synechococcus sp. (strain WH7803)</name>
    <dbReference type="NCBI Taxonomy" id="32051"/>
    <lineage>
        <taxon>Bacteria</taxon>
        <taxon>Bacillati</taxon>
        <taxon>Cyanobacteriota</taxon>
        <taxon>Cyanophyceae</taxon>
        <taxon>Synechococcales</taxon>
        <taxon>Synechococcaceae</taxon>
        <taxon>Synechococcus</taxon>
    </lineage>
</organism>
<evidence type="ECO:0000255" key="1">
    <source>
        <dbReference type="HAMAP-Rule" id="MF_00480"/>
    </source>
</evidence>
<evidence type="ECO:0000305" key="2"/>
<comment type="function">
    <text evidence="1">One of the primary rRNA binding proteins, it binds directly to 16S rRNA where it nucleates assembly of the head domain of the 30S subunit. Is located at the subunit interface close to the decoding center, probably blocks exit of the E-site tRNA.</text>
</comment>
<comment type="subunit">
    <text evidence="1">Part of the 30S ribosomal subunit. Contacts proteins S9 and S11.</text>
</comment>
<comment type="similarity">
    <text evidence="1">Belongs to the universal ribosomal protein uS7 family.</text>
</comment>
<keyword id="KW-1185">Reference proteome</keyword>
<keyword id="KW-0687">Ribonucleoprotein</keyword>
<keyword id="KW-0689">Ribosomal protein</keyword>
<keyword id="KW-0694">RNA-binding</keyword>
<keyword id="KW-0699">rRNA-binding</keyword>
<keyword id="KW-0820">tRNA-binding</keyword>
<proteinExistence type="inferred from homology"/>
<gene>
    <name evidence="1" type="primary">rpsG</name>
    <name evidence="1" type="synonym">rps7</name>
    <name type="ordered locus">SynWH7803_0381</name>
</gene>
<accession>A5GIP2</accession>